<sequence length="123" mass="14526">MKTKLGFNRLSRKSSHRRALLKNMVISFFKHEKISSTKTKLFEVKRFAERLITRAKVDTVHNRRELSKFIHDKYILNKLFTKISPVFRQRSGGYTRMIKLGKRYGDAAEMAILELVEKPLKVE</sequence>
<reference key="1">
    <citation type="journal article" date="2011" name="J. Bacteriol.">
        <title>Whole-genome sequences of thirteen isolates of Borrelia burgdorferi.</title>
        <authorList>
            <person name="Schutzer S.E."/>
            <person name="Fraser-Liggett C.M."/>
            <person name="Casjens S.R."/>
            <person name="Qiu W.G."/>
            <person name="Dunn J.J."/>
            <person name="Mongodin E.F."/>
            <person name="Luft B.J."/>
        </authorList>
    </citation>
    <scope>NUCLEOTIDE SEQUENCE [LARGE SCALE GENOMIC DNA]</scope>
    <source>
        <strain>ZS7</strain>
    </source>
</reference>
<proteinExistence type="inferred from homology"/>
<feature type="chain" id="PRO_1000144381" description="Large ribosomal subunit protein bL17">
    <location>
        <begin position="1"/>
        <end position="123"/>
    </location>
</feature>
<evidence type="ECO:0000255" key="1">
    <source>
        <dbReference type="HAMAP-Rule" id="MF_01368"/>
    </source>
</evidence>
<evidence type="ECO:0000305" key="2"/>
<keyword id="KW-0687">Ribonucleoprotein</keyword>
<keyword id="KW-0689">Ribosomal protein</keyword>
<protein>
    <recommendedName>
        <fullName evidence="1">Large ribosomal subunit protein bL17</fullName>
    </recommendedName>
    <alternativeName>
        <fullName evidence="2">50S ribosomal protein L17</fullName>
    </alternativeName>
</protein>
<organism>
    <name type="scientific">Borreliella burgdorferi (strain ZS7)</name>
    <name type="common">Borrelia burgdorferi</name>
    <dbReference type="NCBI Taxonomy" id="445985"/>
    <lineage>
        <taxon>Bacteria</taxon>
        <taxon>Pseudomonadati</taxon>
        <taxon>Spirochaetota</taxon>
        <taxon>Spirochaetia</taxon>
        <taxon>Spirochaetales</taxon>
        <taxon>Borreliaceae</taxon>
        <taxon>Borreliella</taxon>
    </lineage>
</organism>
<accession>B7J268</accession>
<gene>
    <name evidence="1" type="primary">rplQ</name>
    <name type="ordered locus">BbuZS7_0514</name>
</gene>
<dbReference type="EMBL" id="CP001205">
    <property type="protein sequence ID" value="ACK75212.1"/>
    <property type="molecule type" value="Genomic_DNA"/>
</dbReference>
<dbReference type="RefSeq" id="WP_002657979.1">
    <property type="nucleotide sequence ID" value="NC_011728.1"/>
</dbReference>
<dbReference type="SMR" id="B7J268"/>
<dbReference type="GeneID" id="56567938"/>
<dbReference type="KEGG" id="bbz:BbuZS7_0514"/>
<dbReference type="HOGENOM" id="CLU_074407_2_0_12"/>
<dbReference type="Proteomes" id="UP000006901">
    <property type="component" value="Chromosome"/>
</dbReference>
<dbReference type="GO" id="GO:0022625">
    <property type="term" value="C:cytosolic large ribosomal subunit"/>
    <property type="evidence" value="ECO:0007669"/>
    <property type="project" value="TreeGrafter"/>
</dbReference>
<dbReference type="GO" id="GO:0003735">
    <property type="term" value="F:structural constituent of ribosome"/>
    <property type="evidence" value="ECO:0007669"/>
    <property type="project" value="InterPro"/>
</dbReference>
<dbReference type="GO" id="GO:0006412">
    <property type="term" value="P:translation"/>
    <property type="evidence" value="ECO:0007669"/>
    <property type="project" value="UniProtKB-UniRule"/>
</dbReference>
<dbReference type="FunFam" id="3.90.1030.10:FF:000018">
    <property type="entry name" value="50S ribosomal protein L17"/>
    <property type="match status" value="1"/>
</dbReference>
<dbReference type="Gene3D" id="3.90.1030.10">
    <property type="entry name" value="Ribosomal protein L17"/>
    <property type="match status" value="1"/>
</dbReference>
<dbReference type="HAMAP" id="MF_01368">
    <property type="entry name" value="Ribosomal_bL17"/>
    <property type="match status" value="1"/>
</dbReference>
<dbReference type="InterPro" id="IPR000456">
    <property type="entry name" value="Ribosomal_bL17"/>
</dbReference>
<dbReference type="InterPro" id="IPR047859">
    <property type="entry name" value="Ribosomal_bL17_CS"/>
</dbReference>
<dbReference type="InterPro" id="IPR036373">
    <property type="entry name" value="Ribosomal_bL17_sf"/>
</dbReference>
<dbReference type="NCBIfam" id="TIGR00059">
    <property type="entry name" value="L17"/>
    <property type="match status" value="1"/>
</dbReference>
<dbReference type="PANTHER" id="PTHR14413:SF16">
    <property type="entry name" value="LARGE RIBOSOMAL SUBUNIT PROTEIN BL17M"/>
    <property type="match status" value="1"/>
</dbReference>
<dbReference type="PANTHER" id="PTHR14413">
    <property type="entry name" value="RIBOSOMAL PROTEIN L17"/>
    <property type="match status" value="1"/>
</dbReference>
<dbReference type="Pfam" id="PF01196">
    <property type="entry name" value="Ribosomal_L17"/>
    <property type="match status" value="1"/>
</dbReference>
<dbReference type="SUPFAM" id="SSF64263">
    <property type="entry name" value="Prokaryotic ribosomal protein L17"/>
    <property type="match status" value="1"/>
</dbReference>
<dbReference type="PROSITE" id="PS01167">
    <property type="entry name" value="RIBOSOMAL_L17"/>
    <property type="match status" value="1"/>
</dbReference>
<comment type="subunit">
    <text evidence="1">Part of the 50S ribosomal subunit. Contacts protein L32.</text>
</comment>
<comment type="similarity">
    <text evidence="1">Belongs to the bacterial ribosomal protein bL17 family.</text>
</comment>
<name>RL17_BORBZ</name>